<accession>Q97Q18</accession>
<comment type="function">
    <text evidence="1">Catalyzes the ATP- as well as the pyrophosphate-dependent phosphorylation of a specific serine residue in HPr, a phosphocarrier protein of the phosphoenolpyruvate-dependent sugar phosphotransferase system (PTS). HprK/P also catalyzes the pyrophosphate-producing, inorganic phosphate-dependent dephosphorylation (phosphorolysis) of seryl-phosphorylated HPr (P-Ser-HPr). The two antagonistic activities of HprK/P are regulated by several intracellular metabolites, which change their concentration in response to the absence or presence of rapidly metabolisable carbon sources (glucose, fructose, etc.) in the growth medium. Therefore, by controlling the phosphorylation state of HPr, HPrK/P is a sensor enzyme that plays a major role in the regulation of carbon metabolism and sugar transport: it mediates carbon catabolite repression (CCR), and regulates PTS-catalyzed carbohydrate uptake and inducer exclusion.</text>
</comment>
<comment type="catalytic activity">
    <reaction evidence="1">
        <text>[HPr protein]-L-serine + ATP = [HPr protein]-O-phospho-L-serine + ADP + H(+)</text>
        <dbReference type="Rhea" id="RHEA:46600"/>
        <dbReference type="Rhea" id="RHEA-COMP:11602"/>
        <dbReference type="Rhea" id="RHEA-COMP:11603"/>
        <dbReference type="ChEBI" id="CHEBI:15378"/>
        <dbReference type="ChEBI" id="CHEBI:29999"/>
        <dbReference type="ChEBI" id="CHEBI:30616"/>
        <dbReference type="ChEBI" id="CHEBI:83421"/>
        <dbReference type="ChEBI" id="CHEBI:456216"/>
    </reaction>
</comment>
<comment type="catalytic activity">
    <reaction evidence="1">
        <text>[HPr protein]-O-phospho-L-serine + phosphate + H(+) = [HPr protein]-L-serine + diphosphate</text>
        <dbReference type="Rhea" id="RHEA:46604"/>
        <dbReference type="Rhea" id="RHEA-COMP:11602"/>
        <dbReference type="Rhea" id="RHEA-COMP:11603"/>
        <dbReference type="ChEBI" id="CHEBI:15378"/>
        <dbReference type="ChEBI" id="CHEBI:29999"/>
        <dbReference type="ChEBI" id="CHEBI:33019"/>
        <dbReference type="ChEBI" id="CHEBI:43474"/>
        <dbReference type="ChEBI" id="CHEBI:83421"/>
    </reaction>
</comment>
<comment type="cofactor">
    <cofactor evidence="1">
        <name>Mg(2+)</name>
        <dbReference type="ChEBI" id="CHEBI:18420"/>
    </cofactor>
</comment>
<comment type="subunit">
    <text evidence="1">Homohexamer.</text>
</comment>
<comment type="domain">
    <text evidence="1">The Walker A ATP-binding motif also binds Pi and PPi.</text>
</comment>
<comment type="miscellaneous">
    <text evidence="1">Both phosphorylation and phosphorolysis are carried out by the same active site and suggest a common mechanism for both reactions.</text>
</comment>
<comment type="similarity">
    <text evidence="1">Belongs to the HPrK/P family.</text>
</comment>
<dbReference type="EC" id="2.7.11.-" evidence="1"/>
<dbReference type="EC" id="2.7.4.-" evidence="1"/>
<dbReference type="EMBL" id="AE005672">
    <property type="protein sequence ID" value="AAK75511.1"/>
    <property type="molecule type" value="Genomic_DNA"/>
</dbReference>
<dbReference type="PIR" id="F95164">
    <property type="entry name" value="F95164"/>
</dbReference>
<dbReference type="SMR" id="Q97Q18"/>
<dbReference type="PaxDb" id="170187-SP_1413"/>
<dbReference type="EnsemblBacteria" id="AAK75511">
    <property type="protein sequence ID" value="AAK75511"/>
    <property type="gene ID" value="SP_1413"/>
</dbReference>
<dbReference type="KEGG" id="spn:SP_1413"/>
<dbReference type="eggNOG" id="COG1493">
    <property type="taxonomic scope" value="Bacteria"/>
</dbReference>
<dbReference type="PhylomeDB" id="Q97Q18"/>
<dbReference type="Proteomes" id="UP000000585">
    <property type="component" value="Chromosome"/>
</dbReference>
<dbReference type="GO" id="GO:0005524">
    <property type="term" value="F:ATP binding"/>
    <property type="evidence" value="ECO:0007669"/>
    <property type="project" value="UniProtKB-UniRule"/>
</dbReference>
<dbReference type="GO" id="GO:0000287">
    <property type="term" value="F:magnesium ion binding"/>
    <property type="evidence" value="ECO:0007669"/>
    <property type="project" value="UniProtKB-UniRule"/>
</dbReference>
<dbReference type="GO" id="GO:0000155">
    <property type="term" value="F:phosphorelay sensor kinase activity"/>
    <property type="evidence" value="ECO:0007669"/>
    <property type="project" value="InterPro"/>
</dbReference>
<dbReference type="GO" id="GO:0004674">
    <property type="term" value="F:protein serine/threonine kinase activity"/>
    <property type="evidence" value="ECO:0007669"/>
    <property type="project" value="UniProtKB-KW"/>
</dbReference>
<dbReference type="GO" id="GO:0004712">
    <property type="term" value="F:protein serine/threonine/tyrosine kinase activity"/>
    <property type="evidence" value="ECO:0007669"/>
    <property type="project" value="UniProtKB-UniRule"/>
</dbReference>
<dbReference type="GO" id="GO:0006109">
    <property type="term" value="P:regulation of carbohydrate metabolic process"/>
    <property type="evidence" value="ECO:0007669"/>
    <property type="project" value="UniProtKB-UniRule"/>
</dbReference>
<dbReference type="CDD" id="cd01918">
    <property type="entry name" value="HprK_C"/>
    <property type="match status" value="1"/>
</dbReference>
<dbReference type="FunFam" id="3.40.1390.20:FF:000005">
    <property type="entry name" value="HPr kinase/phosphorylase"/>
    <property type="match status" value="1"/>
</dbReference>
<dbReference type="FunFam" id="3.40.50.300:FF:000174">
    <property type="entry name" value="HPr kinase/phosphorylase"/>
    <property type="match status" value="1"/>
</dbReference>
<dbReference type="Gene3D" id="3.40.1390.20">
    <property type="entry name" value="HprK N-terminal domain-like"/>
    <property type="match status" value="1"/>
</dbReference>
<dbReference type="Gene3D" id="3.40.50.300">
    <property type="entry name" value="P-loop containing nucleotide triphosphate hydrolases"/>
    <property type="match status" value="1"/>
</dbReference>
<dbReference type="HAMAP" id="MF_01249">
    <property type="entry name" value="HPr_kinase"/>
    <property type="match status" value="1"/>
</dbReference>
<dbReference type="InterPro" id="IPR003755">
    <property type="entry name" value="HPr(Ser)_kin/Pase"/>
</dbReference>
<dbReference type="InterPro" id="IPR011104">
    <property type="entry name" value="Hpr_kin/Pase_C"/>
</dbReference>
<dbReference type="InterPro" id="IPR011126">
    <property type="entry name" value="Hpr_kin/Pase_Hpr_N"/>
</dbReference>
<dbReference type="InterPro" id="IPR027417">
    <property type="entry name" value="P-loop_NTPase"/>
</dbReference>
<dbReference type="InterPro" id="IPR028979">
    <property type="entry name" value="Ser_kin/Pase_Hpr-like_N_sf"/>
</dbReference>
<dbReference type="NCBIfam" id="TIGR00679">
    <property type="entry name" value="hpr-ser"/>
    <property type="match status" value="1"/>
</dbReference>
<dbReference type="PANTHER" id="PTHR30305:SF1">
    <property type="entry name" value="HPR KINASE_PHOSPHORYLASE"/>
    <property type="match status" value="1"/>
</dbReference>
<dbReference type="PANTHER" id="PTHR30305">
    <property type="entry name" value="PROTEIN YJDM-RELATED"/>
    <property type="match status" value="1"/>
</dbReference>
<dbReference type="Pfam" id="PF07475">
    <property type="entry name" value="Hpr_kinase_C"/>
    <property type="match status" value="1"/>
</dbReference>
<dbReference type="Pfam" id="PF02603">
    <property type="entry name" value="Hpr_kinase_N"/>
    <property type="match status" value="1"/>
</dbReference>
<dbReference type="SUPFAM" id="SSF75138">
    <property type="entry name" value="HprK N-terminal domain-like"/>
    <property type="match status" value="1"/>
</dbReference>
<dbReference type="SUPFAM" id="SSF53795">
    <property type="entry name" value="PEP carboxykinase-like"/>
    <property type="match status" value="1"/>
</dbReference>
<proteinExistence type="inferred from homology"/>
<sequence>MMSVLVKEVIEKLRLDIVYGEPELLEKEINTADITRPGLEMTGYFDYYTPERIQLLGMKEWSYLISMPSNSRYEVLKKMFLPETPAVIVARGLVVPEEMLKAARECKIAILTSRAATSRLSGELSSYLDSRLAERTSVHGVLMDIYGMGVLIQGDSGIGKSETGLELVKRGHRLVADDRVDIFAKDEITLWGEPAEILKHLIEIRGVGIIDVMSLYGASAVKDSSQVQLAVYLENYDTHKTFDRLGNNAEELEVSGVAIPRIRIPVKTGRNISVVIEAAAMNYRAKEMGFDATRLFDERLTSLIARNEVQNA</sequence>
<evidence type="ECO:0000255" key="1">
    <source>
        <dbReference type="HAMAP-Rule" id="MF_01249"/>
    </source>
</evidence>
<feature type="chain" id="PRO_0000058996" description="HPr kinase/phosphorylase">
    <location>
        <begin position="1"/>
        <end position="312"/>
    </location>
</feature>
<feature type="region of interest" description="Important for the catalytic mechanism of both phosphorylation and dephosphorylation" evidence="1">
    <location>
        <begin position="202"/>
        <end position="211"/>
    </location>
</feature>
<feature type="region of interest" description="Important for the catalytic mechanism of dephosphorylation" evidence="1">
    <location>
        <begin position="265"/>
        <end position="270"/>
    </location>
</feature>
<feature type="active site" evidence="1">
    <location>
        <position position="139"/>
    </location>
</feature>
<feature type="active site" evidence="1">
    <location>
        <position position="160"/>
    </location>
</feature>
<feature type="active site" description="Proton acceptor; for phosphorylation activity. Proton donor; for dephosphorylation activity" evidence="1">
    <location>
        <position position="178"/>
    </location>
</feature>
<feature type="active site" evidence="1">
    <location>
        <position position="244"/>
    </location>
</feature>
<feature type="binding site" evidence="1">
    <location>
        <begin position="154"/>
        <end position="161"/>
    </location>
    <ligand>
        <name>ATP</name>
        <dbReference type="ChEBI" id="CHEBI:30616"/>
    </ligand>
</feature>
<feature type="binding site" evidence="1">
    <location>
        <position position="161"/>
    </location>
    <ligand>
        <name>Mg(2+)</name>
        <dbReference type="ChEBI" id="CHEBI:18420"/>
    </ligand>
</feature>
<feature type="binding site" evidence="1">
    <location>
        <position position="203"/>
    </location>
    <ligand>
        <name>Mg(2+)</name>
        <dbReference type="ChEBI" id="CHEBI:18420"/>
    </ligand>
</feature>
<organism>
    <name type="scientific">Streptococcus pneumoniae serotype 4 (strain ATCC BAA-334 / TIGR4)</name>
    <dbReference type="NCBI Taxonomy" id="170187"/>
    <lineage>
        <taxon>Bacteria</taxon>
        <taxon>Bacillati</taxon>
        <taxon>Bacillota</taxon>
        <taxon>Bacilli</taxon>
        <taxon>Lactobacillales</taxon>
        <taxon>Streptococcaceae</taxon>
        <taxon>Streptococcus</taxon>
    </lineage>
</organism>
<gene>
    <name evidence="1" type="primary">hprK</name>
    <name type="ordered locus">SP_1413</name>
</gene>
<keyword id="KW-0067">ATP-binding</keyword>
<keyword id="KW-0119">Carbohydrate metabolism</keyword>
<keyword id="KW-0418">Kinase</keyword>
<keyword id="KW-0460">Magnesium</keyword>
<keyword id="KW-0479">Metal-binding</keyword>
<keyword id="KW-0511">Multifunctional enzyme</keyword>
<keyword id="KW-0547">Nucleotide-binding</keyword>
<keyword id="KW-1185">Reference proteome</keyword>
<keyword id="KW-0723">Serine/threonine-protein kinase</keyword>
<keyword id="KW-0808">Transferase</keyword>
<protein>
    <recommendedName>
        <fullName evidence="1">HPr kinase/phosphorylase</fullName>
        <shortName evidence="1">HPrK/P</shortName>
        <ecNumber evidence="1">2.7.11.-</ecNumber>
        <ecNumber evidence="1">2.7.4.-</ecNumber>
    </recommendedName>
    <alternativeName>
        <fullName evidence="1">HPr(Ser) kinase/phosphorylase</fullName>
    </alternativeName>
</protein>
<name>HPRK_STRPN</name>
<reference key="1">
    <citation type="journal article" date="2001" name="Science">
        <title>Complete genome sequence of a virulent isolate of Streptococcus pneumoniae.</title>
        <authorList>
            <person name="Tettelin H."/>
            <person name="Nelson K.E."/>
            <person name="Paulsen I.T."/>
            <person name="Eisen J.A."/>
            <person name="Read T.D."/>
            <person name="Peterson S.N."/>
            <person name="Heidelberg J.F."/>
            <person name="DeBoy R.T."/>
            <person name="Haft D.H."/>
            <person name="Dodson R.J."/>
            <person name="Durkin A.S."/>
            <person name="Gwinn M.L."/>
            <person name="Kolonay J.F."/>
            <person name="Nelson W.C."/>
            <person name="Peterson J.D."/>
            <person name="Umayam L.A."/>
            <person name="White O."/>
            <person name="Salzberg S.L."/>
            <person name="Lewis M.R."/>
            <person name="Radune D."/>
            <person name="Holtzapple E.K."/>
            <person name="Khouri H.M."/>
            <person name="Wolf A.M."/>
            <person name="Utterback T.R."/>
            <person name="Hansen C.L."/>
            <person name="McDonald L.A."/>
            <person name="Feldblyum T.V."/>
            <person name="Angiuoli S.V."/>
            <person name="Dickinson T."/>
            <person name="Hickey E.K."/>
            <person name="Holt I.E."/>
            <person name="Loftus B.J."/>
            <person name="Yang F."/>
            <person name="Smith H.O."/>
            <person name="Venter J.C."/>
            <person name="Dougherty B.A."/>
            <person name="Morrison D.A."/>
            <person name="Hollingshead S.K."/>
            <person name="Fraser C.M."/>
        </authorList>
    </citation>
    <scope>NUCLEOTIDE SEQUENCE [LARGE SCALE GENOMIC DNA]</scope>
    <source>
        <strain>ATCC BAA-334 / TIGR4</strain>
    </source>
</reference>